<protein>
    <recommendedName>
        <fullName evidence="5">Cytochrome P450 710A2</fullName>
        <ecNumber evidence="3">1.14.19.41</ecNumber>
    </recommendedName>
    <alternativeName>
        <fullName evidence="5">C-22 sterol desaturase</fullName>
    </alternativeName>
</protein>
<name>C7102_ARATH</name>
<evidence type="ECO:0000250" key="1">
    <source>
        <dbReference type="UniProtKB" id="P04798"/>
    </source>
</evidence>
<evidence type="ECO:0000255" key="2"/>
<evidence type="ECO:0000269" key="3">
    <source>
    </source>
</evidence>
<evidence type="ECO:0000269" key="4">
    <source>
    </source>
</evidence>
<evidence type="ECO:0000303" key="5">
    <source>
    </source>
</evidence>
<evidence type="ECO:0000305" key="6"/>
<evidence type="ECO:0000312" key="7">
    <source>
        <dbReference type="Araport" id="AT2G34490"/>
    </source>
</evidence>
<evidence type="ECO:0000312" key="8">
    <source>
        <dbReference type="EMBL" id="AAM14945.1"/>
    </source>
</evidence>
<sequence length="499" mass="56346">MVFSVSIFASLAPYLVSALLLFFLIEQLSYLVKKRNLPGPLFVPPIIGNAISLVRDPTSFWFKQSDTAGTSPGLAANYLIGKFIIYIRDTELSHQIFSNVRLEAFHPLGHPFGKQLFGDHSLIYLFGEDHKTVRRHLAPNFTPKALSTYSDLQQIVMLRHLRQWEESFSGGTKPVSMRDLVRELNLETSQTVFVGPYLDKEARNTFCTDYNLFNLGSMALPINLPGFAFNKARRAVMNLEKTLSVCAGKSKKRMATGEEPTCLIDFWMHAFVTEIESGNPPPLHSEDEAIGGLLFDFLFAAQDASTSSLLWAVTFLESHPKVLSKVREEVAKIWSPQSGHLITADQLAEMKYTRAVAREVVRYRPPATMVPHIATNDFPLTESYTIPKGTIVFPSVFDASFQGFTEPNRFDPDRFSETRQEDQVFKRNYLAFGWGAHQCVGQRYALNHLVLFIAMFSSLFDFKRLQSDGCDDIIYCPTISPKDGCTVFLSKRIVTYPNL</sequence>
<organism>
    <name type="scientific">Arabidopsis thaliana</name>
    <name type="common">Mouse-ear cress</name>
    <dbReference type="NCBI Taxonomy" id="3702"/>
    <lineage>
        <taxon>Eukaryota</taxon>
        <taxon>Viridiplantae</taxon>
        <taxon>Streptophyta</taxon>
        <taxon>Embryophyta</taxon>
        <taxon>Tracheophyta</taxon>
        <taxon>Spermatophyta</taxon>
        <taxon>Magnoliopsida</taxon>
        <taxon>eudicotyledons</taxon>
        <taxon>Gunneridae</taxon>
        <taxon>Pentapetalae</taxon>
        <taxon>rosids</taxon>
        <taxon>malvids</taxon>
        <taxon>Brassicales</taxon>
        <taxon>Brassicaceae</taxon>
        <taxon>Camelineae</taxon>
        <taxon>Arabidopsis</taxon>
    </lineage>
</organism>
<keyword id="KW-0349">Heme</keyword>
<keyword id="KW-0408">Iron</keyword>
<keyword id="KW-0444">Lipid biosynthesis</keyword>
<keyword id="KW-0443">Lipid metabolism</keyword>
<keyword id="KW-0472">Membrane</keyword>
<keyword id="KW-0479">Metal-binding</keyword>
<keyword id="KW-0503">Monooxygenase</keyword>
<keyword id="KW-0521">NADP</keyword>
<keyword id="KW-0560">Oxidoreductase</keyword>
<keyword id="KW-1185">Reference proteome</keyword>
<keyword id="KW-0752">Steroid biosynthesis</keyword>
<keyword id="KW-0753">Steroid metabolism</keyword>
<keyword id="KW-0756">Sterol biosynthesis</keyword>
<keyword id="KW-1207">Sterol metabolism</keyword>
<keyword id="KW-0812">Transmembrane</keyword>
<keyword id="KW-1133">Transmembrane helix</keyword>
<feature type="chain" id="PRO_0000411206" description="Cytochrome P450 710A2">
    <location>
        <begin position="1"/>
        <end position="499"/>
    </location>
</feature>
<feature type="transmembrane region" description="Helical" evidence="2">
    <location>
        <begin position="5"/>
        <end position="25"/>
    </location>
</feature>
<feature type="binding site" description="axial binding residue" evidence="1">
    <location>
        <position position="439"/>
    </location>
    <ligand>
        <name>heme</name>
        <dbReference type="ChEBI" id="CHEBI:30413"/>
    </ligand>
    <ligandPart>
        <name>Fe</name>
        <dbReference type="ChEBI" id="CHEBI:18248"/>
    </ligandPart>
</feature>
<feature type="sequence conflict" description="In Ref. 4; AAM62799." evidence="6" ref="4">
    <original>A</original>
    <variation>S</variation>
    <location>
        <position position="18"/>
    </location>
</feature>
<dbReference type="EC" id="1.14.19.41" evidence="3"/>
<dbReference type="EMBL" id="AB233425">
    <property type="protein sequence ID" value="BAE80316.1"/>
    <property type="molecule type" value="Genomic_DNA"/>
</dbReference>
<dbReference type="EMBL" id="AC004077">
    <property type="protein sequence ID" value="AAC26691.1"/>
    <property type="molecule type" value="Genomic_DNA"/>
</dbReference>
<dbReference type="EMBL" id="AC004481">
    <property type="protein sequence ID" value="AAM14945.1"/>
    <property type="molecule type" value="Genomic_DNA"/>
</dbReference>
<dbReference type="EMBL" id="CP002685">
    <property type="protein sequence ID" value="AEC08981.1"/>
    <property type="molecule type" value="Genomic_DNA"/>
</dbReference>
<dbReference type="EMBL" id="AY074867">
    <property type="protein sequence ID" value="AAL75888.1"/>
    <property type="molecule type" value="mRNA"/>
</dbReference>
<dbReference type="EMBL" id="AY101543">
    <property type="protein sequence ID" value="AAM26664.1"/>
    <property type="molecule type" value="mRNA"/>
</dbReference>
<dbReference type="EMBL" id="AY085577">
    <property type="protein sequence ID" value="AAM62799.1"/>
    <property type="molecule type" value="mRNA"/>
</dbReference>
<dbReference type="PIR" id="T02336">
    <property type="entry name" value="T02336"/>
</dbReference>
<dbReference type="RefSeq" id="NP_180996.1">
    <property type="nucleotide sequence ID" value="NM_129001.3"/>
</dbReference>
<dbReference type="SMR" id="O64698"/>
<dbReference type="FunCoup" id="O64698">
    <property type="interactions" value="773"/>
</dbReference>
<dbReference type="STRING" id="3702.O64698"/>
<dbReference type="PaxDb" id="3702-AT2G34490.1"/>
<dbReference type="ProteomicsDB" id="239119"/>
<dbReference type="EnsemblPlants" id="AT2G34490.1">
    <property type="protein sequence ID" value="AT2G34490.1"/>
    <property type="gene ID" value="AT2G34490"/>
</dbReference>
<dbReference type="GeneID" id="818012"/>
<dbReference type="Gramene" id="AT2G34490.1">
    <property type="protein sequence ID" value="AT2G34490.1"/>
    <property type="gene ID" value="AT2G34490"/>
</dbReference>
<dbReference type="KEGG" id="ath:AT2G34490"/>
<dbReference type="Araport" id="AT2G34490"/>
<dbReference type="TAIR" id="AT2G34490">
    <property type="gene designation" value="CYP710A2"/>
</dbReference>
<dbReference type="eggNOG" id="KOG0157">
    <property type="taxonomic scope" value="Eukaryota"/>
</dbReference>
<dbReference type="HOGENOM" id="CLU_023517_1_0_1"/>
<dbReference type="InParanoid" id="O64698"/>
<dbReference type="OMA" id="VPHIATN"/>
<dbReference type="OrthoDB" id="1372046at2759"/>
<dbReference type="PhylomeDB" id="O64698"/>
<dbReference type="BioCyc" id="ARA:AT2G34490-MONOMER"/>
<dbReference type="BioCyc" id="MetaCyc:AT2G34490-MONOMER"/>
<dbReference type="BRENDA" id="1.14.19.41">
    <property type="organism ID" value="399"/>
</dbReference>
<dbReference type="UniPathway" id="UPA00766"/>
<dbReference type="PRO" id="PR:O64698"/>
<dbReference type="Proteomes" id="UP000006548">
    <property type="component" value="Chromosome 2"/>
</dbReference>
<dbReference type="ExpressionAtlas" id="O64698">
    <property type="expression patterns" value="baseline and differential"/>
</dbReference>
<dbReference type="GO" id="GO:0016020">
    <property type="term" value="C:membrane"/>
    <property type="evidence" value="ECO:0007669"/>
    <property type="project" value="UniProtKB-SubCell"/>
</dbReference>
<dbReference type="GO" id="GO:0000249">
    <property type="term" value="F:C-22 sterol desaturase (NADPH) activity"/>
    <property type="evidence" value="ECO:0000314"/>
    <property type="project" value="TAIR"/>
</dbReference>
<dbReference type="GO" id="GO:0020037">
    <property type="term" value="F:heme binding"/>
    <property type="evidence" value="ECO:0007669"/>
    <property type="project" value="InterPro"/>
</dbReference>
<dbReference type="GO" id="GO:0005506">
    <property type="term" value="F:iron ion binding"/>
    <property type="evidence" value="ECO:0007669"/>
    <property type="project" value="InterPro"/>
</dbReference>
<dbReference type="GO" id="GO:0004497">
    <property type="term" value="F:monooxygenase activity"/>
    <property type="evidence" value="ECO:0007669"/>
    <property type="project" value="UniProtKB-KW"/>
</dbReference>
<dbReference type="GO" id="GO:0016126">
    <property type="term" value="P:sterol biosynthetic process"/>
    <property type="evidence" value="ECO:0007669"/>
    <property type="project" value="UniProtKB-UniPathway"/>
</dbReference>
<dbReference type="CDD" id="cd11082">
    <property type="entry name" value="CYP61_CYP710"/>
    <property type="match status" value="1"/>
</dbReference>
<dbReference type="FunFam" id="1.10.630.10:FF:000021">
    <property type="entry name" value="Cytochrome P450 61"/>
    <property type="match status" value="1"/>
</dbReference>
<dbReference type="Gene3D" id="1.10.630.10">
    <property type="entry name" value="Cytochrome P450"/>
    <property type="match status" value="1"/>
</dbReference>
<dbReference type="InterPro" id="IPR001128">
    <property type="entry name" value="Cyt_P450"/>
</dbReference>
<dbReference type="InterPro" id="IPR017972">
    <property type="entry name" value="Cyt_P450_CS"/>
</dbReference>
<dbReference type="InterPro" id="IPR002401">
    <property type="entry name" value="Cyt_P450_E_grp-I"/>
</dbReference>
<dbReference type="InterPro" id="IPR036396">
    <property type="entry name" value="Cyt_P450_sf"/>
</dbReference>
<dbReference type="PANTHER" id="PTHR24286:SF228">
    <property type="entry name" value="C-22 STEROL DESATURASE ERG5"/>
    <property type="match status" value="1"/>
</dbReference>
<dbReference type="PANTHER" id="PTHR24286">
    <property type="entry name" value="CYTOCHROME P450 26"/>
    <property type="match status" value="1"/>
</dbReference>
<dbReference type="Pfam" id="PF00067">
    <property type="entry name" value="p450"/>
    <property type="match status" value="1"/>
</dbReference>
<dbReference type="PRINTS" id="PR00463">
    <property type="entry name" value="EP450I"/>
</dbReference>
<dbReference type="PRINTS" id="PR00385">
    <property type="entry name" value="P450"/>
</dbReference>
<dbReference type="SUPFAM" id="SSF48264">
    <property type="entry name" value="Cytochrome P450"/>
    <property type="match status" value="1"/>
</dbReference>
<dbReference type="PROSITE" id="PS00086">
    <property type="entry name" value="CYTOCHROME_P450"/>
    <property type="match status" value="1"/>
</dbReference>
<reference key="1">
    <citation type="journal article" date="2006" name="Plant Cell">
        <title>Cytochrome P450 CYP710A encodes the sterol C-22 desaturase in Arabidopsis and tomato.</title>
        <authorList>
            <person name="Morikawa T."/>
            <person name="Mizutani M."/>
            <person name="Aoki N."/>
            <person name="Watanabe B."/>
            <person name="Saga H."/>
            <person name="Saito S."/>
            <person name="Oikawa A."/>
            <person name="Suzuki H."/>
            <person name="Sakurai N."/>
            <person name="Shibata D."/>
            <person name="Wadano A."/>
            <person name="Sakata K."/>
            <person name="Ohta D."/>
        </authorList>
    </citation>
    <scope>NUCLEOTIDE SEQUENCE [GENOMIC DNA]</scope>
    <scope>FUNCTION</scope>
    <scope>CATALYTIC ACTIVITY</scope>
    <scope>TISSUE SPECIFICITY</scope>
    <scope>DISRUPTION PHENOTYPE</scope>
    <scope>PATHWAY</scope>
</reference>
<reference key="2">
    <citation type="journal article" date="1999" name="Nature">
        <title>Sequence and analysis of chromosome 2 of the plant Arabidopsis thaliana.</title>
        <authorList>
            <person name="Lin X."/>
            <person name="Kaul S."/>
            <person name="Rounsley S.D."/>
            <person name="Shea T.P."/>
            <person name="Benito M.-I."/>
            <person name="Town C.D."/>
            <person name="Fujii C.Y."/>
            <person name="Mason T.M."/>
            <person name="Bowman C.L."/>
            <person name="Barnstead M.E."/>
            <person name="Feldblyum T.V."/>
            <person name="Buell C.R."/>
            <person name="Ketchum K.A."/>
            <person name="Lee J.J."/>
            <person name="Ronning C.M."/>
            <person name="Koo H.L."/>
            <person name="Moffat K.S."/>
            <person name="Cronin L.A."/>
            <person name="Shen M."/>
            <person name="Pai G."/>
            <person name="Van Aken S."/>
            <person name="Umayam L."/>
            <person name="Tallon L.J."/>
            <person name="Gill J.E."/>
            <person name="Adams M.D."/>
            <person name="Carrera A.J."/>
            <person name="Creasy T.H."/>
            <person name="Goodman H.M."/>
            <person name="Somerville C.R."/>
            <person name="Copenhaver G.P."/>
            <person name="Preuss D."/>
            <person name="Nierman W.C."/>
            <person name="White O."/>
            <person name="Eisen J.A."/>
            <person name="Salzberg S.L."/>
            <person name="Fraser C.M."/>
            <person name="Venter J.C."/>
        </authorList>
    </citation>
    <scope>NUCLEOTIDE SEQUENCE [LARGE SCALE GENOMIC DNA]</scope>
    <source>
        <strain>cv. Columbia</strain>
    </source>
</reference>
<reference key="3">
    <citation type="journal article" date="2017" name="Plant J.">
        <title>Araport11: a complete reannotation of the Arabidopsis thaliana reference genome.</title>
        <authorList>
            <person name="Cheng C.Y."/>
            <person name="Krishnakumar V."/>
            <person name="Chan A.P."/>
            <person name="Thibaud-Nissen F."/>
            <person name="Schobel S."/>
            <person name="Town C.D."/>
        </authorList>
    </citation>
    <scope>GENOME REANNOTATION</scope>
    <source>
        <strain>cv. Columbia</strain>
    </source>
</reference>
<reference key="4">
    <citation type="journal article" date="2003" name="Science">
        <title>Empirical analysis of transcriptional activity in the Arabidopsis genome.</title>
        <authorList>
            <person name="Yamada K."/>
            <person name="Lim J."/>
            <person name="Dale J.M."/>
            <person name="Chen H."/>
            <person name="Shinn P."/>
            <person name="Palm C.J."/>
            <person name="Southwick A.M."/>
            <person name="Wu H.C."/>
            <person name="Kim C.J."/>
            <person name="Nguyen M."/>
            <person name="Pham P.K."/>
            <person name="Cheuk R.F."/>
            <person name="Karlin-Newmann G."/>
            <person name="Liu S.X."/>
            <person name="Lam B."/>
            <person name="Sakano H."/>
            <person name="Wu T."/>
            <person name="Yu G."/>
            <person name="Miranda M."/>
            <person name="Quach H.L."/>
            <person name="Tripp M."/>
            <person name="Chang C.H."/>
            <person name="Lee J.M."/>
            <person name="Toriumi M.J."/>
            <person name="Chan M.M."/>
            <person name="Tang C.C."/>
            <person name="Onodera C.S."/>
            <person name="Deng J.M."/>
            <person name="Akiyama K."/>
            <person name="Ansari Y."/>
            <person name="Arakawa T."/>
            <person name="Banh J."/>
            <person name="Banno F."/>
            <person name="Bowser L."/>
            <person name="Brooks S.Y."/>
            <person name="Carninci P."/>
            <person name="Chao Q."/>
            <person name="Choy N."/>
            <person name="Enju A."/>
            <person name="Goldsmith A.D."/>
            <person name="Gurjal M."/>
            <person name="Hansen N.F."/>
            <person name="Hayashizaki Y."/>
            <person name="Johnson-Hopson C."/>
            <person name="Hsuan V.W."/>
            <person name="Iida K."/>
            <person name="Karnes M."/>
            <person name="Khan S."/>
            <person name="Koesema E."/>
            <person name="Ishida J."/>
            <person name="Jiang P.X."/>
            <person name="Jones T."/>
            <person name="Kawai J."/>
            <person name="Kamiya A."/>
            <person name="Meyers C."/>
            <person name="Nakajima M."/>
            <person name="Narusaka M."/>
            <person name="Seki M."/>
            <person name="Sakurai T."/>
            <person name="Satou M."/>
            <person name="Tamse R."/>
            <person name="Vaysberg M."/>
            <person name="Wallender E.K."/>
            <person name="Wong C."/>
            <person name="Yamamura Y."/>
            <person name="Yuan S."/>
            <person name="Shinozaki K."/>
            <person name="Davis R.W."/>
            <person name="Theologis A."/>
            <person name="Ecker J.R."/>
        </authorList>
    </citation>
    <scope>NUCLEOTIDE SEQUENCE [LARGE SCALE MRNA]</scope>
    <source>
        <strain>cv. Columbia</strain>
    </source>
</reference>
<reference key="5">
    <citation type="submission" date="2002-03" db="EMBL/GenBank/DDBJ databases">
        <title>Full-length cDNA from Arabidopsis thaliana.</title>
        <authorList>
            <person name="Brover V.V."/>
            <person name="Troukhan M.E."/>
            <person name="Alexandrov N.A."/>
            <person name="Lu Y.-P."/>
            <person name="Flavell R.B."/>
            <person name="Feldmann K.A."/>
        </authorList>
    </citation>
    <scope>NUCLEOTIDE SEQUENCE [LARGE SCALE MRNA]</scope>
</reference>
<reference key="6">
    <citation type="journal article" date="2010" name="Plant J.">
        <title>A role for beta-sitosterol to stigmasterol conversion in plant-pathogen interactions.</title>
        <authorList>
            <person name="Griebel T."/>
            <person name="Zeier J."/>
        </authorList>
    </citation>
    <scope>INDUCTION</scope>
</reference>
<proteinExistence type="evidence at protein level"/>
<accession>O64698</accession>
<accession>Q8LE78</accession>
<comment type="function">
    <text evidence="3">Required to form the C-22 double bond in the sterol side chain. Possesses in vitro C-22 desaturase activity toward 24-epi-campesterol and beta-sitosterol and produces brassicasterol and stigmasterol, respectively. No activity with campesterol.</text>
</comment>
<comment type="catalytic activity">
    <reaction evidence="3">
        <text>5-dehydroepisterol + NADPH + O2 + H(+) = ergosta-5,7,22,24(28)-tetraen-3beta-ol + NADP(+) + 2 H2O</text>
        <dbReference type="Rhea" id="RHEA:33467"/>
        <dbReference type="ChEBI" id="CHEBI:15377"/>
        <dbReference type="ChEBI" id="CHEBI:15378"/>
        <dbReference type="ChEBI" id="CHEBI:15379"/>
        <dbReference type="ChEBI" id="CHEBI:18249"/>
        <dbReference type="ChEBI" id="CHEBI:52972"/>
        <dbReference type="ChEBI" id="CHEBI:57783"/>
        <dbReference type="ChEBI" id="CHEBI:58349"/>
        <dbReference type="EC" id="1.14.19.41"/>
    </reaction>
</comment>
<comment type="cofactor">
    <cofactor evidence="1">
        <name>heme</name>
        <dbReference type="ChEBI" id="CHEBI:30413"/>
    </cofactor>
</comment>
<comment type="pathway">
    <text evidence="3">Steroid biosynthesis; sterol biosynthesis.</text>
</comment>
<comment type="subcellular location">
    <subcellularLocation>
        <location evidence="6">Membrane</location>
        <topology evidence="6">Single-pass membrane protein</topology>
    </subcellularLocation>
</comment>
<comment type="tissue specificity">
    <text evidence="3">Expressed in the vascular tissues of roots, shoots, stems and leaves. Expressed in root tips, carpes, siliques and seeds.</text>
</comment>
<comment type="induction">
    <text evidence="4">Not induced by pathogen infection.</text>
</comment>
<comment type="disruption phenotype">
    <text evidence="3">No visible phenotype under normal growth conditions, but production of brassicasterol is abolished.</text>
</comment>
<comment type="miscellaneous">
    <text evidence="3">Plants overexpressing CYP710A2 show higher levels of brassicasterol/crinosterol and stigmasterol, and lower levels of 24-epi-campesterol/campesterol and beta-sitosterol than the wild-type.</text>
</comment>
<comment type="similarity">
    <text evidence="6">Belongs to the cytochrome P450 family.</text>
</comment>
<gene>
    <name evidence="5" type="primary">CYP710A2</name>
    <name evidence="7" type="ordered locus">At2g34490</name>
    <name evidence="8" type="ORF">F13P17.22</name>
</gene>